<sequence>MRFLDGHTPAYDLTYNDVFVVPGRSDVASRFDVDLSTVDGSGTTIPVVVANMTAVAGRRMAETVARRGGIVVLPQDLPITAVSETVDFVKSRDLVVDTPVTLSPEDSVSDANALLHKRAHGAAVVVFEGRPIGLVTEANCAGVDRFARVRDIALSDFVTAPVGTDPREVFDLLEHAPIDVAVMTAPDGTLAGVLTRTGAIRAGIYTPAVDAKGRLRIAAAVGINGDVGAKAQALAEAGADLLVIDTAHGHQAKMLDAIKAVASLDLGLPLVAGNVVSAEGTRDLIEAGASIVKVGVGPGAMCTTRMMTGVGRPQFSAVVECAAAARQLGGHVWADGGVRHPRDVALALAAGASNVMIGSWFAGTYESPGDLLFDRDDRPYKESYGMASKRAVAARTAGDSSFDRARKGLFEEGISTSRMSLDPARGGVEDLLDHITSGVRSTCTYVGAANLPELHEKVVLGVQSAAGFAEGHPLPAGW</sequence>
<gene>
    <name evidence="5" type="primary">guaB1</name>
    <name evidence="8" type="ordered locus">MSMEG_3634</name>
    <name evidence="9" type="ordered locus">MSMEI_3548</name>
</gene>
<reference key="1">
    <citation type="submission" date="2006-10" db="EMBL/GenBank/DDBJ databases">
        <authorList>
            <person name="Fleischmann R.D."/>
            <person name="Dodson R.J."/>
            <person name="Haft D.H."/>
            <person name="Merkel J.S."/>
            <person name="Nelson W.C."/>
            <person name="Fraser C.M."/>
        </authorList>
    </citation>
    <scope>NUCLEOTIDE SEQUENCE [LARGE SCALE GENOMIC DNA]</scope>
    <source>
        <strain>ATCC 700084 / mc(2)155</strain>
    </source>
</reference>
<reference key="2">
    <citation type="journal article" date="2007" name="Genome Biol.">
        <title>Interrupted coding sequences in Mycobacterium smegmatis: authentic mutations or sequencing errors?</title>
        <authorList>
            <person name="Deshayes C."/>
            <person name="Perrodou E."/>
            <person name="Gallien S."/>
            <person name="Euphrasie D."/>
            <person name="Schaeffer C."/>
            <person name="Van-Dorsselaer A."/>
            <person name="Poch O."/>
            <person name="Lecompte O."/>
            <person name="Reyrat J.-M."/>
        </authorList>
    </citation>
    <scope>NUCLEOTIDE SEQUENCE [LARGE SCALE GENOMIC DNA]</scope>
    <source>
        <strain>ATCC 700084 / mc(2)155</strain>
    </source>
</reference>
<reference key="3">
    <citation type="journal article" date="2009" name="Genome Res.">
        <title>Ortho-proteogenomics: multiple proteomes investigation through orthology and a new MS-based protocol.</title>
        <authorList>
            <person name="Gallien S."/>
            <person name="Perrodou E."/>
            <person name="Carapito C."/>
            <person name="Deshayes C."/>
            <person name="Reyrat J.-M."/>
            <person name="Van Dorsselaer A."/>
            <person name="Poch O."/>
            <person name="Schaeffer C."/>
            <person name="Lecompte O."/>
        </authorList>
    </citation>
    <scope>NUCLEOTIDE SEQUENCE [LARGE SCALE GENOMIC DNA]</scope>
    <source>
        <strain>ATCC 700084 / mc(2)155</strain>
    </source>
</reference>
<reference key="4">
    <citation type="journal article" date="2022" name="FEBS J.">
        <title>The mycobacterial guaB1 gene encodes a guanosine 5'-monophosphate reductase with a cystathionine-beta-synthase domain.</title>
        <authorList>
            <person name="Knejzlik Z."/>
            <person name="Dolezal M."/>
            <person name="Herkommerova K."/>
            <person name="Clarova K."/>
            <person name="Klima M."/>
            <person name="Dedola M."/>
            <person name="Zbornikova E."/>
            <person name="Rejman D."/>
            <person name="Pichova I."/>
        </authorList>
    </citation>
    <scope>X-RAY CRYSTALLOGRAPHY (2.50 ANGSTROMS) OF APOENZYME AND IN COMPLEX WITH GMP</scope>
    <scope>FUNCTION</scope>
    <scope>CATALYTIC ACTIVITY</scope>
    <scope>COFACTOR</scope>
    <scope>ACTIVITY REGULATION</scope>
    <scope>BIOPHYSICOCHEMICAL PROPERTIES</scope>
    <scope>SUBUNIT</scope>
    <scope>DISRUPTION PHENOTYPE</scope>
    <source>
        <strain>ATCC 700084 / mc(2)155</strain>
    </source>
</reference>
<name>GUAB1_MYCS2</name>
<proteinExistence type="evidence at protein level"/>
<accession>A0QYE8</accession>
<accession>I7GA39</accession>
<organism>
    <name type="scientific">Mycolicibacterium smegmatis (strain ATCC 700084 / mc(2)155)</name>
    <name type="common">Mycobacterium smegmatis</name>
    <dbReference type="NCBI Taxonomy" id="246196"/>
    <lineage>
        <taxon>Bacteria</taxon>
        <taxon>Bacillati</taxon>
        <taxon>Actinomycetota</taxon>
        <taxon>Actinomycetes</taxon>
        <taxon>Mycobacteriales</taxon>
        <taxon>Mycobacteriaceae</taxon>
        <taxon>Mycolicibacterium</taxon>
    </lineage>
</organism>
<comment type="function">
    <text evidence="4">Involved in the purine-salvage pathway (PubMed:35338694). Catalyzes the NADPH-dependent conversion of GMP to IMP (PubMed:35338694). Is not essential for viability, but may contribute to the regulation of the purine nucleotide pool by recycling GMP to IMP (PubMed:35338694).</text>
</comment>
<comment type="catalytic activity">
    <reaction evidence="2 4">
        <text>IMP + NH4(+) + NADP(+) = GMP + NADPH + 2 H(+)</text>
        <dbReference type="Rhea" id="RHEA:17185"/>
        <dbReference type="ChEBI" id="CHEBI:15378"/>
        <dbReference type="ChEBI" id="CHEBI:28938"/>
        <dbReference type="ChEBI" id="CHEBI:57783"/>
        <dbReference type="ChEBI" id="CHEBI:58053"/>
        <dbReference type="ChEBI" id="CHEBI:58115"/>
        <dbReference type="ChEBI" id="CHEBI:58349"/>
        <dbReference type="EC" id="1.7.1.7"/>
    </reaction>
    <physiologicalReaction direction="right-to-left" evidence="2 4">
        <dbReference type="Rhea" id="RHEA:17187"/>
    </physiologicalReaction>
</comment>
<comment type="cofactor">
    <cofactor evidence="2 4">
        <name>a monovalent cation</name>
        <dbReference type="ChEBI" id="CHEBI:60242"/>
    </cofactor>
    <text evidence="4">Activity is highest with Rb(+), followed by K(+), NH4(+) and Cs(+).</text>
</comment>
<comment type="activity regulation">
    <text evidence="4">Activity is allosterically regulated by the ATP/GTP ratio in a pH-dependent manner (PubMed:35338694). At pH 7.8, GTP has only a minor positive effect and ATP only a minor negative effect on the activity, however, at lower pH values, the effects of ATP and GTP increase (PubMed:35338694). ATP-dependent inhibition can be restored by increasing GTP concentration (PubMed:35338694). IMP and XMP are competitive inhibitors (PubMed:35338694).</text>
</comment>
<comment type="biophysicochemical properties">
    <kinetics>
        <KM evidence="4">30 uM for NADPH (at pH 7.8)</KM>
        <KM evidence="4">63 uM for NADPH (at pH 6.6)</KM>
    </kinetics>
    <phDependence>
        <text evidence="4">Optimum pH is 7.4-7.8.</text>
    </phDependence>
</comment>
<comment type="pathway">
    <text evidence="2 7">Purine metabolism; IMP biosynthesis via salvage pathway.</text>
</comment>
<comment type="subunit">
    <text evidence="4">Homooctamer composed of two tetramers (PubMed:35338694). The oligomerization state is regulated by ligands and pH (PubMed:35338694).</text>
</comment>
<comment type="disruption phenotype">
    <text evidence="4">Knocked out mutant does not require any purine supplement for the growth and does not exhibit any growth defects in media containing hypoxanthine, guanine and adenine.</text>
</comment>
<comment type="similarity">
    <text evidence="2 6">Belongs to the IMPDH/GMPR family. GuaB1 subfamily.</text>
</comment>
<dbReference type="EC" id="1.7.1.7" evidence="4"/>
<dbReference type="EMBL" id="CP000480">
    <property type="protein sequence ID" value="ABK74721.1"/>
    <property type="molecule type" value="Genomic_DNA"/>
</dbReference>
<dbReference type="EMBL" id="CP001663">
    <property type="protein sequence ID" value="AFP40011.1"/>
    <property type="molecule type" value="Genomic_DNA"/>
</dbReference>
<dbReference type="RefSeq" id="WP_011729218.1">
    <property type="nucleotide sequence ID" value="NZ_SIJM01000008.1"/>
</dbReference>
<dbReference type="RefSeq" id="YP_887936.1">
    <property type="nucleotide sequence ID" value="NC_008596.1"/>
</dbReference>
<dbReference type="PDB" id="7OY9">
    <property type="method" value="X-ray"/>
    <property type="resolution" value="2.80 A"/>
    <property type="chains" value="A/B/C/D/E/F/G/H=2-478"/>
</dbReference>
<dbReference type="PDB" id="7R50">
    <property type="method" value="X-ray"/>
    <property type="resolution" value="2.50 A"/>
    <property type="chains" value="A/B/C/D/E/F/G/H/I/J/K/L/M/N/O/P=2-478"/>
</dbReference>
<dbReference type="PDBsum" id="7OY9"/>
<dbReference type="PDBsum" id="7R50"/>
<dbReference type="SMR" id="A0QYE8"/>
<dbReference type="STRING" id="246196.MSMEG_3634"/>
<dbReference type="PaxDb" id="246196-MSMEI_3548"/>
<dbReference type="KEGG" id="msb:LJ00_18065"/>
<dbReference type="KEGG" id="msg:MSMEI_3548"/>
<dbReference type="KEGG" id="msm:MSMEG_3634"/>
<dbReference type="PATRIC" id="fig|246196.19.peg.3581"/>
<dbReference type="eggNOG" id="COG0516">
    <property type="taxonomic scope" value="Bacteria"/>
</dbReference>
<dbReference type="eggNOG" id="COG0517">
    <property type="taxonomic scope" value="Bacteria"/>
</dbReference>
<dbReference type="OrthoDB" id="9805398at2"/>
<dbReference type="UniPathway" id="UPA00591"/>
<dbReference type="Proteomes" id="UP000000757">
    <property type="component" value="Chromosome"/>
</dbReference>
<dbReference type="Proteomes" id="UP000006158">
    <property type="component" value="Chromosome"/>
</dbReference>
<dbReference type="GO" id="GO:0005829">
    <property type="term" value="C:cytosol"/>
    <property type="evidence" value="ECO:0007669"/>
    <property type="project" value="TreeGrafter"/>
</dbReference>
<dbReference type="GO" id="GO:0003920">
    <property type="term" value="F:GMP reductase activity"/>
    <property type="evidence" value="ECO:0007669"/>
    <property type="project" value="UniProtKB-UniRule"/>
</dbReference>
<dbReference type="GO" id="GO:0003938">
    <property type="term" value="F:IMP dehydrogenase activity"/>
    <property type="evidence" value="ECO:0007669"/>
    <property type="project" value="InterPro"/>
</dbReference>
<dbReference type="GO" id="GO:0032264">
    <property type="term" value="P:IMP salvage"/>
    <property type="evidence" value="ECO:0007669"/>
    <property type="project" value="UniProtKB-UniRule"/>
</dbReference>
<dbReference type="GO" id="GO:0006166">
    <property type="term" value="P:purine ribonucleoside salvage"/>
    <property type="evidence" value="ECO:0007669"/>
    <property type="project" value="UniProtKB-KW"/>
</dbReference>
<dbReference type="CDD" id="cd02205">
    <property type="entry name" value="CBS_pair_SF"/>
    <property type="match status" value="1"/>
</dbReference>
<dbReference type="CDD" id="cd00381">
    <property type="entry name" value="IMPDH"/>
    <property type="match status" value="1"/>
</dbReference>
<dbReference type="FunFam" id="3.20.20.70:FF:000424">
    <property type="entry name" value="Inosine-5'-monophosphate dehydrogenase 2"/>
    <property type="match status" value="1"/>
</dbReference>
<dbReference type="Gene3D" id="3.20.20.70">
    <property type="entry name" value="Aldolase class I"/>
    <property type="match status" value="1"/>
</dbReference>
<dbReference type="HAMAP" id="MF_02250">
    <property type="entry name" value="GMPR_GuaB1"/>
    <property type="match status" value="1"/>
</dbReference>
<dbReference type="InterPro" id="IPR013785">
    <property type="entry name" value="Aldolase_TIM"/>
</dbReference>
<dbReference type="InterPro" id="IPR000644">
    <property type="entry name" value="CBS_dom"/>
</dbReference>
<dbReference type="InterPro" id="IPR046342">
    <property type="entry name" value="CBS_dom_sf"/>
</dbReference>
<dbReference type="InterPro" id="IPR050139">
    <property type="entry name" value="GMP_reductase"/>
</dbReference>
<dbReference type="InterPro" id="IPR005991">
    <property type="entry name" value="GUAB1"/>
</dbReference>
<dbReference type="InterPro" id="IPR005990">
    <property type="entry name" value="IMP_DH"/>
</dbReference>
<dbReference type="InterPro" id="IPR001093">
    <property type="entry name" value="IMP_DH_GMPRt"/>
</dbReference>
<dbReference type="NCBIfam" id="TIGR01303">
    <property type="entry name" value="IMP_DH_rel_1"/>
    <property type="match status" value="1"/>
</dbReference>
<dbReference type="NCBIfam" id="NF005869">
    <property type="entry name" value="PRK07807.1"/>
    <property type="match status" value="1"/>
</dbReference>
<dbReference type="PANTHER" id="PTHR43170">
    <property type="entry name" value="GMP REDUCTASE"/>
    <property type="match status" value="1"/>
</dbReference>
<dbReference type="PANTHER" id="PTHR43170:SF5">
    <property type="entry name" value="GMP REDUCTASE"/>
    <property type="match status" value="1"/>
</dbReference>
<dbReference type="Pfam" id="PF00571">
    <property type="entry name" value="CBS"/>
    <property type="match status" value="2"/>
</dbReference>
<dbReference type="Pfam" id="PF00478">
    <property type="entry name" value="IMPDH"/>
    <property type="match status" value="1"/>
</dbReference>
<dbReference type="PIRSF" id="PIRSF000130">
    <property type="entry name" value="IMPDH"/>
    <property type="match status" value="1"/>
</dbReference>
<dbReference type="SMART" id="SM01240">
    <property type="entry name" value="IMPDH"/>
    <property type="match status" value="1"/>
</dbReference>
<dbReference type="SUPFAM" id="SSF54631">
    <property type="entry name" value="CBS-domain pair"/>
    <property type="match status" value="1"/>
</dbReference>
<dbReference type="SUPFAM" id="SSF51412">
    <property type="entry name" value="Inosine monophosphate dehydrogenase (IMPDH)"/>
    <property type="match status" value="1"/>
</dbReference>
<dbReference type="PROSITE" id="PS51371">
    <property type="entry name" value="CBS"/>
    <property type="match status" value="2"/>
</dbReference>
<keyword id="KW-0002">3D-structure</keyword>
<keyword id="KW-0021">Allosteric enzyme</keyword>
<keyword id="KW-0129">CBS domain</keyword>
<keyword id="KW-0521">NADP</keyword>
<keyword id="KW-0560">Oxidoreductase</keyword>
<keyword id="KW-0660">Purine salvage</keyword>
<keyword id="KW-1185">Reference proteome</keyword>
<keyword id="KW-0677">Repeat</keyword>
<protein>
    <recommendedName>
        <fullName evidence="6">GMP reductase</fullName>
        <ecNumber evidence="4">1.7.1.7</ecNumber>
    </recommendedName>
    <alternativeName>
        <fullName evidence="5">Guanosine 5'-monophosphate reductase</fullName>
        <shortName evidence="5">GMPR</shortName>
    </alternativeName>
</protein>
<evidence type="ECO:0000250" key="1">
    <source>
        <dbReference type="UniProtKB" id="P50097"/>
    </source>
</evidence>
<evidence type="ECO:0000255" key="2">
    <source>
        <dbReference type="HAMAP-Rule" id="MF_02250"/>
    </source>
</evidence>
<evidence type="ECO:0000255" key="3">
    <source>
        <dbReference type="PROSITE-ProRule" id="PRU00703"/>
    </source>
</evidence>
<evidence type="ECO:0000269" key="4">
    <source>
    </source>
</evidence>
<evidence type="ECO:0000303" key="5">
    <source>
    </source>
</evidence>
<evidence type="ECO:0000305" key="6"/>
<evidence type="ECO:0000305" key="7">
    <source>
    </source>
</evidence>
<evidence type="ECO:0000312" key="8">
    <source>
        <dbReference type="EMBL" id="ABK74721.1"/>
    </source>
</evidence>
<evidence type="ECO:0000312" key="9">
    <source>
        <dbReference type="EMBL" id="AFP40011.1"/>
    </source>
</evidence>
<evidence type="ECO:0007829" key="10">
    <source>
        <dbReference type="PDB" id="7OY9"/>
    </source>
</evidence>
<evidence type="ECO:0007829" key="11">
    <source>
        <dbReference type="PDB" id="7R50"/>
    </source>
</evidence>
<feature type="chain" id="PRO_0000456250" description="GMP reductase">
    <location>
        <begin position="1"/>
        <end position="478"/>
    </location>
</feature>
<feature type="domain" description="CBS 1" evidence="3">
    <location>
        <begin position="95"/>
        <end position="152"/>
    </location>
</feature>
<feature type="domain" description="CBS 2" evidence="3">
    <location>
        <begin position="153"/>
        <end position="211"/>
    </location>
</feature>
<feature type="active site" description="Thioimidate intermediate" evidence="1">
    <location>
        <position position="302"/>
    </location>
</feature>
<feature type="binding site" evidence="1">
    <location>
        <begin position="245"/>
        <end position="247"/>
    </location>
    <ligand>
        <name>NADP(+)</name>
        <dbReference type="ChEBI" id="CHEBI:58349"/>
    </ligand>
</feature>
<feature type="binding site" evidence="1">
    <location>
        <begin position="295"/>
        <end position="297"/>
    </location>
    <ligand>
        <name>NADP(+)</name>
        <dbReference type="ChEBI" id="CHEBI:58349"/>
    </ligand>
</feature>
<feature type="helix" evidence="11">
    <location>
        <begin position="15"/>
        <end position="17"/>
    </location>
</feature>
<feature type="strand" evidence="11">
    <location>
        <begin position="18"/>
        <end position="21"/>
    </location>
</feature>
<feature type="helix" evidence="11">
    <location>
        <begin position="30"/>
        <end position="32"/>
    </location>
</feature>
<feature type="strand" evidence="11">
    <location>
        <begin position="38"/>
        <end position="41"/>
    </location>
</feature>
<feature type="strand" evidence="11">
    <location>
        <begin position="44"/>
        <end position="46"/>
    </location>
</feature>
<feature type="turn" evidence="11">
    <location>
        <begin position="53"/>
        <end position="55"/>
    </location>
</feature>
<feature type="helix" evidence="11">
    <location>
        <begin position="58"/>
        <end position="66"/>
    </location>
</feature>
<feature type="strand" evidence="11">
    <location>
        <begin position="70"/>
        <end position="73"/>
    </location>
</feature>
<feature type="helix" evidence="11">
    <location>
        <begin position="79"/>
        <end position="90"/>
    </location>
</feature>
<feature type="strand" evidence="11">
    <location>
        <begin position="94"/>
        <end position="97"/>
    </location>
</feature>
<feature type="helix" evidence="11">
    <location>
        <begin position="108"/>
        <end position="115"/>
    </location>
</feature>
<feature type="strand" evidence="11">
    <location>
        <begin position="118"/>
        <end position="127"/>
    </location>
</feature>
<feature type="strand" evidence="11">
    <location>
        <begin position="130"/>
        <end position="136"/>
    </location>
</feature>
<feature type="turn" evidence="11">
    <location>
        <begin position="137"/>
        <end position="139"/>
    </location>
</feature>
<feature type="strand" evidence="11">
    <location>
        <begin position="140"/>
        <end position="143"/>
    </location>
</feature>
<feature type="turn" evidence="11">
    <location>
        <begin position="150"/>
        <end position="152"/>
    </location>
</feature>
<feature type="strand" evidence="11">
    <location>
        <begin position="159"/>
        <end position="161"/>
    </location>
</feature>
<feature type="helix" evidence="11">
    <location>
        <begin position="166"/>
        <end position="172"/>
    </location>
</feature>
<feature type="strand" evidence="11">
    <location>
        <begin position="177"/>
        <end position="179"/>
    </location>
</feature>
<feature type="strand" evidence="11">
    <location>
        <begin position="181"/>
        <end position="184"/>
    </location>
</feature>
<feature type="strand" evidence="11">
    <location>
        <begin position="188"/>
        <end position="194"/>
    </location>
</feature>
<feature type="helix" evidence="11">
    <location>
        <begin position="196"/>
        <end position="204"/>
    </location>
</feature>
<feature type="strand" evidence="11">
    <location>
        <begin position="218"/>
        <end position="221"/>
    </location>
</feature>
<feature type="strand" evidence="11">
    <location>
        <begin position="223"/>
        <end position="225"/>
    </location>
</feature>
<feature type="helix" evidence="11">
    <location>
        <begin position="227"/>
        <end position="236"/>
    </location>
</feature>
<feature type="strand" evidence="11">
    <location>
        <begin position="240"/>
        <end position="244"/>
    </location>
</feature>
<feature type="helix" evidence="11">
    <location>
        <begin position="252"/>
        <end position="262"/>
    </location>
</feature>
<feature type="strand" evidence="11">
    <location>
        <begin position="270"/>
        <end position="272"/>
    </location>
</feature>
<feature type="helix" evidence="11">
    <location>
        <begin position="278"/>
        <end position="285"/>
    </location>
</feature>
<feature type="turn" evidence="11">
    <location>
        <begin position="286"/>
        <end position="288"/>
    </location>
</feature>
<feature type="strand" evidence="11">
    <location>
        <begin position="290"/>
        <end position="294"/>
    </location>
</feature>
<feature type="helix" evidence="11">
    <location>
        <begin position="304"/>
        <end position="307"/>
    </location>
</feature>
<feature type="helix" evidence="11">
    <location>
        <begin position="314"/>
        <end position="327"/>
    </location>
</feature>
<feature type="strand" evidence="11">
    <location>
        <begin position="331"/>
        <end position="336"/>
    </location>
</feature>
<feature type="helix" evidence="11">
    <location>
        <begin position="341"/>
        <end position="349"/>
    </location>
</feature>
<feature type="strand" evidence="11">
    <location>
        <begin position="353"/>
        <end position="357"/>
    </location>
</feature>
<feature type="helix" evidence="11">
    <location>
        <begin position="359"/>
        <end position="363"/>
    </location>
</feature>
<feature type="strand" evidence="11">
    <location>
        <begin position="364"/>
        <end position="369"/>
    </location>
</feature>
<feature type="strand" evidence="11">
    <location>
        <begin position="379"/>
        <end position="384"/>
    </location>
</feature>
<feature type="helix" evidence="11">
    <location>
        <begin position="387"/>
        <end position="390"/>
    </location>
</feature>
<feature type="helix" evidence="11">
    <location>
        <begin position="401"/>
        <end position="409"/>
    </location>
</feature>
<feature type="strand" evidence="11">
    <location>
        <begin position="416"/>
        <end position="420"/>
    </location>
</feature>
<feature type="strand" evidence="10">
    <location>
        <begin position="423"/>
        <end position="425"/>
    </location>
</feature>
<feature type="helix" evidence="11">
    <location>
        <begin position="428"/>
        <end position="446"/>
    </location>
</feature>
<feature type="helix" evidence="11">
    <location>
        <begin position="451"/>
        <end position="457"/>
    </location>
</feature>
<feature type="strand" evidence="11">
    <location>
        <begin position="459"/>
        <end position="462"/>
    </location>
</feature>
<feature type="helix" evidence="11">
    <location>
        <begin position="465"/>
        <end position="467"/>
    </location>
</feature>